<comment type="similarity">
    <text evidence="5">Belongs to the glycosyl hydrolase 19 family. Chitinase class I subfamily.</text>
</comment>
<comment type="caution">
    <text evidence="5">Lacks the conserved Glu residue that is essential for catalytic activity, suggesting it lacks enzyme activity.</text>
</comment>
<accession>O24654</accession>
<reference key="1">
    <citation type="journal article" date="1999" name="Nature">
        <title>Sequence and analysis of chromosome 2 of the plant Arabidopsis thaliana.</title>
        <authorList>
            <person name="Lin X."/>
            <person name="Kaul S."/>
            <person name="Rounsley S.D."/>
            <person name="Shea T.P."/>
            <person name="Benito M.-I."/>
            <person name="Town C.D."/>
            <person name="Fujii C.Y."/>
            <person name="Mason T.M."/>
            <person name="Bowman C.L."/>
            <person name="Barnstead M.E."/>
            <person name="Feldblyum T.V."/>
            <person name="Buell C.R."/>
            <person name="Ketchum K.A."/>
            <person name="Lee J.J."/>
            <person name="Ronning C.M."/>
            <person name="Koo H.L."/>
            <person name="Moffat K.S."/>
            <person name="Cronin L.A."/>
            <person name="Shen M."/>
            <person name="Pai G."/>
            <person name="Van Aken S."/>
            <person name="Umayam L."/>
            <person name="Tallon L.J."/>
            <person name="Gill J.E."/>
            <person name="Adams M.D."/>
            <person name="Carrera A.J."/>
            <person name="Creasy T.H."/>
            <person name="Goodman H.M."/>
            <person name="Somerville C.R."/>
            <person name="Copenhaver G.P."/>
            <person name="Preuss D."/>
            <person name="Nierman W.C."/>
            <person name="White O."/>
            <person name="Eisen J.A."/>
            <person name="Salzberg S.L."/>
            <person name="Fraser C.M."/>
            <person name="Venter J.C."/>
        </authorList>
    </citation>
    <scope>NUCLEOTIDE SEQUENCE [LARGE SCALE GENOMIC DNA]</scope>
    <source>
        <strain>cv. Columbia</strain>
    </source>
</reference>
<reference key="2">
    <citation type="journal article" date="2017" name="Plant J.">
        <title>Araport11: a complete reannotation of the Arabidopsis thaliana reference genome.</title>
        <authorList>
            <person name="Cheng C.Y."/>
            <person name="Krishnakumar V."/>
            <person name="Chan A.P."/>
            <person name="Thibaud-Nissen F."/>
            <person name="Schobel S."/>
            <person name="Town C.D."/>
        </authorList>
    </citation>
    <scope>GENOME REANNOTATION</scope>
    <source>
        <strain>cv. Columbia</strain>
    </source>
</reference>
<reference key="3">
    <citation type="journal article" date="2001" name="Planta">
        <title>Expression pattern of the Arabidopsis thaliana AtEP3/AtchitIV endochitinase gene.</title>
        <authorList>
            <person name="Passarinho P.A."/>
            <person name="Van Hengel A.J."/>
            <person name="Fransz P.F."/>
            <person name="de Vries S.C."/>
        </authorList>
    </citation>
    <scope>GENE FAMILY</scope>
</reference>
<evidence type="ECO:0000250" key="1">
    <source>
        <dbReference type="UniProtKB" id="P29022"/>
    </source>
</evidence>
<evidence type="ECO:0000255" key="2"/>
<evidence type="ECO:0000255" key="3">
    <source>
        <dbReference type="PROSITE-ProRule" id="PRU00261"/>
    </source>
</evidence>
<evidence type="ECO:0000255" key="4">
    <source>
        <dbReference type="PROSITE-ProRule" id="PRU00498"/>
    </source>
</evidence>
<evidence type="ECO:0000305" key="5"/>
<evidence type="ECO:0000312" key="6">
    <source>
        <dbReference type="EMBL" id="AEC10294.1"/>
    </source>
</evidence>
<evidence type="ECO:0000312" key="7">
    <source>
        <dbReference type="Proteomes" id="UP000006548"/>
    </source>
</evidence>
<gene>
    <name evidence="6" type="ordered locus">At2g43600</name>
    <name evidence="6" type="ORF">F18O19.29</name>
</gene>
<name>CHI60_ARATH</name>
<proteinExistence type="inferred from homology"/>
<dbReference type="EMBL" id="AC002333">
    <property type="protein sequence ID" value="AAB64046.1"/>
    <property type="molecule type" value="Genomic_DNA"/>
</dbReference>
<dbReference type="EMBL" id="AC002335">
    <property type="protein sequence ID" value="AAM14809.1"/>
    <property type="molecule type" value="Genomic_DNA"/>
</dbReference>
<dbReference type="EMBL" id="CP002685">
    <property type="protein sequence ID" value="AEC10294.1"/>
    <property type="molecule type" value="Genomic_DNA"/>
</dbReference>
<dbReference type="PIR" id="B84868">
    <property type="entry name" value="B84868"/>
</dbReference>
<dbReference type="RefSeq" id="NP_001318415.1">
    <property type="nucleotide sequence ID" value="NM_001337048.1"/>
</dbReference>
<dbReference type="SMR" id="O24654"/>
<dbReference type="FunCoup" id="O24654">
    <property type="interactions" value="136"/>
</dbReference>
<dbReference type="STRING" id="3702.O24654"/>
<dbReference type="CAZy" id="CBM18">
    <property type="family name" value="Carbohydrate-Binding Module Family 18"/>
</dbReference>
<dbReference type="CAZy" id="GH19">
    <property type="family name" value="Glycoside Hydrolase Family 19"/>
</dbReference>
<dbReference type="GlyGen" id="O24654">
    <property type="glycosylation" value="1 site"/>
</dbReference>
<dbReference type="PaxDb" id="3702-AT2G43600.1"/>
<dbReference type="EnsemblPlants" id="AT2G43600.1">
    <property type="protein sequence ID" value="AT2G43600.1"/>
    <property type="gene ID" value="AT2G43600"/>
</dbReference>
<dbReference type="GeneID" id="818962"/>
<dbReference type="Gramene" id="AT2G43600.1">
    <property type="protein sequence ID" value="AT2G43600.1"/>
    <property type="gene ID" value="AT2G43600"/>
</dbReference>
<dbReference type="KEGG" id="ath:AT2G43600"/>
<dbReference type="Araport" id="AT2G43600"/>
<dbReference type="TAIR" id="AT2G43600"/>
<dbReference type="eggNOG" id="KOG4742">
    <property type="taxonomic scope" value="Eukaryota"/>
</dbReference>
<dbReference type="HOGENOM" id="CLU_045506_1_1_1"/>
<dbReference type="InParanoid" id="O24654"/>
<dbReference type="PhylomeDB" id="O24654"/>
<dbReference type="PRO" id="PR:O24654"/>
<dbReference type="Proteomes" id="UP000006548">
    <property type="component" value="Chromosome 2"/>
</dbReference>
<dbReference type="ExpressionAtlas" id="O24654">
    <property type="expression patterns" value="baseline and differential"/>
</dbReference>
<dbReference type="GO" id="GO:0008061">
    <property type="term" value="F:chitin binding"/>
    <property type="evidence" value="ECO:0007669"/>
    <property type="project" value="UniProtKB-KW"/>
</dbReference>
<dbReference type="GO" id="GO:0004568">
    <property type="term" value="F:chitinase activity"/>
    <property type="evidence" value="ECO:0007669"/>
    <property type="project" value="InterPro"/>
</dbReference>
<dbReference type="GO" id="GO:0005975">
    <property type="term" value="P:carbohydrate metabolic process"/>
    <property type="evidence" value="ECO:0007669"/>
    <property type="project" value="InterPro"/>
</dbReference>
<dbReference type="GO" id="GO:0016998">
    <property type="term" value="P:cell wall macromolecule catabolic process"/>
    <property type="evidence" value="ECO:0007669"/>
    <property type="project" value="InterPro"/>
</dbReference>
<dbReference type="GO" id="GO:0006032">
    <property type="term" value="P:chitin catabolic process"/>
    <property type="evidence" value="ECO:0007669"/>
    <property type="project" value="InterPro"/>
</dbReference>
<dbReference type="GO" id="GO:0006952">
    <property type="term" value="P:defense response"/>
    <property type="evidence" value="ECO:0007669"/>
    <property type="project" value="UniProtKB-KW"/>
</dbReference>
<dbReference type="CDD" id="cd00325">
    <property type="entry name" value="chitinase_GH19"/>
    <property type="match status" value="1"/>
</dbReference>
<dbReference type="CDD" id="cd00035">
    <property type="entry name" value="ChtBD1"/>
    <property type="match status" value="1"/>
</dbReference>
<dbReference type="FunFam" id="3.30.20.10:FF:000004">
    <property type="entry name" value="Chitinase family protein"/>
    <property type="match status" value="1"/>
</dbReference>
<dbReference type="Gene3D" id="1.10.530.10">
    <property type="match status" value="1"/>
</dbReference>
<dbReference type="Gene3D" id="3.30.20.10">
    <property type="entry name" value="Endochitinase, domain 2"/>
    <property type="match status" value="1"/>
</dbReference>
<dbReference type="Gene3D" id="3.30.60.10">
    <property type="entry name" value="Endochitinase-like"/>
    <property type="match status" value="1"/>
</dbReference>
<dbReference type="InterPro" id="IPR001002">
    <property type="entry name" value="Chitin-bd_1"/>
</dbReference>
<dbReference type="InterPro" id="IPR018371">
    <property type="entry name" value="Chitin-binding_1_CS"/>
</dbReference>
<dbReference type="InterPro" id="IPR036861">
    <property type="entry name" value="Endochitinase-like_sf"/>
</dbReference>
<dbReference type="InterPro" id="IPR016283">
    <property type="entry name" value="Glyco_hydro_19"/>
</dbReference>
<dbReference type="InterPro" id="IPR000726">
    <property type="entry name" value="Glyco_hydro_19_cat"/>
</dbReference>
<dbReference type="InterPro" id="IPR023346">
    <property type="entry name" value="Lysozyme-like_dom_sf"/>
</dbReference>
<dbReference type="PANTHER" id="PTHR22595">
    <property type="entry name" value="CHITINASE-RELATED"/>
    <property type="match status" value="1"/>
</dbReference>
<dbReference type="PANTHER" id="PTHR22595:SF117">
    <property type="entry name" value="GLYCOSIDE HYDROLASE FAMILY 19 CATALYTIC DOMAIN-CONTAINING PROTEIN"/>
    <property type="match status" value="1"/>
</dbReference>
<dbReference type="Pfam" id="PF00182">
    <property type="entry name" value="Glyco_hydro_19"/>
    <property type="match status" value="1"/>
</dbReference>
<dbReference type="PIRSF" id="PIRSF001060">
    <property type="entry name" value="Endochitinase"/>
    <property type="match status" value="1"/>
</dbReference>
<dbReference type="SMART" id="SM00270">
    <property type="entry name" value="ChtBD1"/>
    <property type="match status" value="1"/>
</dbReference>
<dbReference type="SUPFAM" id="SSF53955">
    <property type="entry name" value="Lysozyme-like"/>
    <property type="match status" value="1"/>
</dbReference>
<dbReference type="SUPFAM" id="SSF57016">
    <property type="entry name" value="Plant lectins/antimicrobial peptides"/>
    <property type="match status" value="1"/>
</dbReference>
<dbReference type="PROSITE" id="PS00026">
    <property type="entry name" value="CHIT_BIND_I_1"/>
    <property type="match status" value="1"/>
</dbReference>
<dbReference type="PROSITE" id="PS50941">
    <property type="entry name" value="CHIT_BIND_I_2"/>
    <property type="match status" value="1"/>
</dbReference>
<organism evidence="7">
    <name type="scientific">Arabidopsis thaliana</name>
    <name type="common">Mouse-ear cress</name>
    <dbReference type="NCBI Taxonomy" id="3702"/>
    <lineage>
        <taxon>Eukaryota</taxon>
        <taxon>Viridiplantae</taxon>
        <taxon>Streptophyta</taxon>
        <taxon>Embryophyta</taxon>
        <taxon>Tracheophyta</taxon>
        <taxon>Spermatophyta</taxon>
        <taxon>Magnoliopsida</taxon>
        <taxon>eudicotyledons</taxon>
        <taxon>Gunneridae</taxon>
        <taxon>Pentapetalae</taxon>
        <taxon>rosids</taxon>
        <taxon>malvids</taxon>
        <taxon>Brassicales</taxon>
        <taxon>Brassicaceae</taxon>
        <taxon>Camelineae</taxon>
        <taxon>Arabidopsis</taxon>
    </lineage>
</organism>
<keyword id="KW-0147">Chitin-binding</keyword>
<keyword id="KW-1015">Disulfide bond</keyword>
<keyword id="KW-0325">Glycoprotein</keyword>
<keyword id="KW-0611">Plant defense</keyword>
<keyword id="KW-1185">Reference proteome</keyword>
<keyword id="KW-0732">Signal</keyword>
<feature type="signal peptide" evidence="2">
    <location>
        <begin position="1"/>
        <end position="22"/>
    </location>
</feature>
<feature type="chain" id="PRO_0000433914" description="Inactive endochitinase At2g43600" evidence="2">
    <location>
        <begin position="23"/>
        <end position="273"/>
    </location>
</feature>
<feature type="domain" description="Chitin-binding type-1" evidence="3">
    <location>
        <begin position="23"/>
        <end position="61"/>
    </location>
</feature>
<feature type="region of interest" description="Catalytic" evidence="1">
    <location>
        <begin position="78"/>
        <end position="273"/>
    </location>
</feature>
<feature type="glycosylation site" description="N-linked (GlcNAc...) asparagine" evidence="4">
    <location>
        <position position="99"/>
    </location>
</feature>
<feature type="disulfide bond" evidence="3">
    <location>
        <begin position="25"/>
        <end position="37"/>
    </location>
</feature>
<feature type="disulfide bond" evidence="3">
    <location>
        <begin position="30"/>
        <end position="43"/>
    </location>
</feature>
<feature type="disulfide bond" evidence="3">
    <location>
        <begin position="36"/>
        <end position="50"/>
    </location>
</feature>
<feature type="disulfide bond" evidence="3">
    <location>
        <begin position="54"/>
        <end position="59"/>
    </location>
</feature>
<protein>
    <recommendedName>
        <fullName evidence="5">Inactive endochitinase At2g43600</fullName>
    </recommendedName>
</protein>
<sequence>MTIKNVIFSLFILAILAETVFSQNCMDTSCPGLKECCSRWGFCGTKDEYCGFFCFSGPCNIKGKSYGYDYNVDAGPRGKIETVITSALFDSIMSKVESNCSAKGFYTYEAFITAFKSFGAYKGKVAKREIAAILAHFSYGSKSFCYKEEISNERYCSKSKKYPCEPGKNYYGRGLLQSITWNEYYGAGKHLGLPLLKDPDLVSRSPEVAFKFAMWFWNRNVRPALYLGFGEITKRVDGRECGNWRRDDTKNKVKQYIEFCEMLGVTPDQGLDC</sequence>